<evidence type="ECO:0000255" key="1">
    <source>
        <dbReference type="HAMAP-Rule" id="MF_00149"/>
    </source>
</evidence>
<organism>
    <name type="scientific">Syntrophus aciditrophicus (strain SB)</name>
    <dbReference type="NCBI Taxonomy" id="56780"/>
    <lineage>
        <taxon>Bacteria</taxon>
        <taxon>Pseudomonadati</taxon>
        <taxon>Thermodesulfobacteriota</taxon>
        <taxon>Syntrophia</taxon>
        <taxon>Syntrophales</taxon>
        <taxon>Syntrophaceae</taxon>
        <taxon>Syntrophus</taxon>
    </lineage>
</organism>
<dbReference type="EMBL" id="CP000252">
    <property type="protein sequence ID" value="ABC77825.1"/>
    <property type="molecule type" value="Genomic_DNA"/>
</dbReference>
<dbReference type="RefSeq" id="WP_011417846.1">
    <property type="nucleotide sequence ID" value="NC_007759.1"/>
</dbReference>
<dbReference type="SMR" id="Q2LUR5"/>
<dbReference type="FunCoup" id="Q2LUR5">
    <property type="interactions" value="250"/>
</dbReference>
<dbReference type="STRING" id="56780.SYN_02889"/>
<dbReference type="KEGG" id="sat:SYN_02889"/>
<dbReference type="eggNOG" id="COG0323">
    <property type="taxonomic scope" value="Bacteria"/>
</dbReference>
<dbReference type="HOGENOM" id="CLU_004131_4_2_7"/>
<dbReference type="InParanoid" id="Q2LUR5"/>
<dbReference type="OrthoDB" id="9763467at2"/>
<dbReference type="Proteomes" id="UP000001933">
    <property type="component" value="Chromosome"/>
</dbReference>
<dbReference type="GO" id="GO:0032300">
    <property type="term" value="C:mismatch repair complex"/>
    <property type="evidence" value="ECO:0007669"/>
    <property type="project" value="InterPro"/>
</dbReference>
<dbReference type="GO" id="GO:0005524">
    <property type="term" value="F:ATP binding"/>
    <property type="evidence" value="ECO:0007669"/>
    <property type="project" value="InterPro"/>
</dbReference>
<dbReference type="GO" id="GO:0016887">
    <property type="term" value="F:ATP hydrolysis activity"/>
    <property type="evidence" value="ECO:0007669"/>
    <property type="project" value="InterPro"/>
</dbReference>
<dbReference type="GO" id="GO:0140664">
    <property type="term" value="F:ATP-dependent DNA damage sensor activity"/>
    <property type="evidence" value="ECO:0007669"/>
    <property type="project" value="InterPro"/>
</dbReference>
<dbReference type="GO" id="GO:0030983">
    <property type="term" value="F:mismatched DNA binding"/>
    <property type="evidence" value="ECO:0007669"/>
    <property type="project" value="InterPro"/>
</dbReference>
<dbReference type="GO" id="GO:0006298">
    <property type="term" value="P:mismatch repair"/>
    <property type="evidence" value="ECO:0007669"/>
    <property type="project" value="UniProtKB-UniRule"/>
</dbReference>
<dbReference type="CDD" id="cd16926">
    <property type="entry name" value="HATPase_MutL-MLH-PMS-like"/>
    <property type="match status" value="1"/>
</dbReference>
<dbReference type="CDD" id="cd00782">
    <property type="entry name" value="MutL_Trans"/>
    <property type="match status" value="1"/>
</dbReference>
<dbReference type="FunFam" id="3.30.565.10:FF:000003">
    <property type="entry name" value="DNA mismatch repair endonuclease MutL"/>
    <property type="match status" value="1"/>
</dbReference>
<dbReference type="Gene3D" id="3.30.230.10">
    <property type="match status" value="1"/>
</dbReference>
<dbReference type="Gene3D" id="3.30.565.10">
    <property type="entry name" value="Histidine kinase-like ATPase, C-terminal domain"/>
    <property type="match status" value="1"/>
</dbReference>
<dbReference type="Gene3D" id="3.30.1540.20">
    <property type="entry name" value="MutL, C-terminal domain, dimerisation subdomain"/>
    <property type="match status" value="1"/>
</dbReference>
<dbReference type="Gene3D" id="3.30.1370.100">
    <property type="entry name" value="MutL, C-terminal domain, regulatory subdomain"/>
    <property type="match status" value="1"/>
</dbReference>
<dbReference type="HAMAP" id="MF_00149">
    <property type="entry name" value="DNA_mis_repair"/>
    <property type="match status" value="1"/>
</dbReference>
<dbReference type="InterPro" id="IPR014762">
    <property type="entry name" value="DNA_mismatch_repair_CS"/>
</dbReference>
<dbReference type="InterPro" id="IPR020667">
    <property type="entry name" value="DNA_mismatch_repair_MutL"/>
</dbReference>
<dbReference type="InterPro" id="IPR013507">
    <property type="entry name" value="DNA_mismatch_S5_2-like"/>
</dbReference>
<dbReference type="InterPro" id="IPR036890">
    <property type="entry name" value="HATPase_C_sf"/>
</dbReference>
<dbReference type="InterPro" id="IPR002099">
    <property type="entry name" value="MutL/Mlh/PMS"/>
</dbReference>
<dbReference type="InterPro" id="IPR038973">
    <property type="entry name" value="MutL/Mlh/Pms-like"/>
</dbReference>
<dbReference type="InterPro" id="IPR014790">
    <property type="entry name" value="MutL_C"/>
</dbReference>
<dbReference type="InterPro" id="IPR042120">
    <property type="entry name" value="MutL_C_dimsub"/>
</dbReference>
<dbReference type="InterPro" id="IPR042121">
    <property type="entry name" value="MutL_C_regsub"/>
</dbReference>
<dbReference type="InterPro" id="IPR037198">
    <property type="entry name" value="MutL_C_sf"/>
</dbReference>
<dbReference type="InterPro" id="IPR020568">
    <property type="entry name" value="Ribosomal_Su5_D2-typ_SF"/>
</dbReference>
<dbReference type="InterPro" id="IPR014721">
    <property type="entry name" value="Ribsml_uS5_D2-typ_fold_subgr"/>
</dbReference>
<dbReference type="NCBIfam" id="TIGR00585">
    <property type="entry name" value="mutl"/>
    <property type="match status" value="1"/>
</dbReference>
<dbReference type="PANTHER" id="PTHR10073">
    <property type="entry name" value="DNA MISMATCH REPAIR PROTEIN MLH, PMS, MUTL"/>
    <property type="match status" value="1"/>
</dbReference>
<dbReference type="PANTHER" id="PTHR10073:SF12">
    <property type="entry name" value="DNA MISMATCH REPAIR PROTEIN MLH1"/>
    <property type="match status" value="1"/>
</dbReference>
<dbReference type="Pfam" id="PF01119">
    <property type="entry name" value="DNA_mis_repair"/>
    <property type="match status" value="1"/>
</dbReference>
<dbReference type="Pfam" id="PF13589">
    <property type="entry name" value="HATPase_c_3"/>
    <property type="match status" value="1"/>
</dbReference>
<dbReference type="Pfam" id="PF08676">
    <property type="entry name" value="MutL_C"/>
    <property type="match status" value="1"/>
</dbReference>
<dbReference type="SMART" id="SM01340">
    <property type="entry name" value="DNA_mis_repair"/>
    <property type="match status" value="1"/>
</dbReference>
<dbReference type="SMART" id="SM00853">
    <property type="entry name" value="MutL_C"/>
    <property type="match status" value="1"/>
</dbReference>
<dbReference type="SUPFAM" id="SSF55874">
    <property type="entry name" value="ATPase domain of HSP90 chaperone/DNA topoisomerase II/histidine kinase"/>
    <property type="match status" value="1"/>
</dbReference>
<dbReference type="SUPFAM" id="SSF118116">
    <property type="entry name" value="DNA mismatch repair protein MutL"/>
    <property type="match status" value="1"/>
</dbReference>
<dbReference type="SUPFAM" id="SSF54211">
    <property type="entry name" value="Ribosomal protein S5 domain 2-like"/>
    <property type="match status" value="1"/>
</dbReference>
<dbReference type="PROSITE" id="PS00058">
    <property type="entry name" value="DNA_MISMATCH_REPAIR_1"/>
    <property type="match status" value="1"/>
</dbReference>
<accession>Q2LUR5</accession>
<proteinExistence type="inferred from homology"/>
<sequence>MNRRIVLLPETLTHRIAAGEVVERPASIVKELLENALDSGATDINVELERGGCGLIRVADNGSGIFAQDVTLAFARHATSKIAEFDDLYRVRSFGFRGEALASIASISRTELVTRTADDLAGMRIVVEGGNICEKTEAGCPIGTSITVSRIFDSVPVRKKFLKAEATERAYCLDVITRLSLANPEVRIRVFSKGRELCHYPATSRLSERVALVLGNADADRLQPIEGETDRVRVTGFASRPDFTCATTRQIYTFVNRRHVRDHLLNHAVMTAYRRVIEPRRYPAVVLYVDLDPADVDVNVHPAKLEVRFRQPRTVYEAVVEALSGMLRGMGQSALSLTRYGPAGTAEIGHIPQEDYESRISEALRRYSLASGSRKMMYGTGTEANPVNKKHFLAERIRGEEIHARESLLLSPAPALPQNSFHPVFADLVYLGSLWDSYLIFSVADGMLLIDQHAAHERILFEKIKKAAERNKTAVQVLLIPEILNLSRPDFERFGDVVPLLEQVGIEAEPFGGEEIIIKALPTLLAHLDPGVLVKDLIAECADRGGGLSLQEKGEKIYAYLACRGAVKAGQKLIREEVAQLCRDLDATPFAATCPHGRPVYVLYPLKDIERMFRRR</sequence>
<keyword id="KW-0227">DNA damage</keyword>
<keyword id="KW-0234">DNA repair</keyword>
<keyword id="KW-1185">Reference proteome</keyword>
<protein>
    <recommendedName>
        <fullName evidence="1">DNA mismatch repair protein MutL</fullName>
    </recommendedName>
</protein>
<reference key="1">
    <citation type="journal article" date="2007" name="Proc. Natl. Acad. Sci. U.S.A.">
        <title>The genome of Syntrophus aciditrophicus: life at the thermodynamic limit of microbial growth.</title>
        <authorList>
            <person name="McInerney M.J."/>
            <person name="Rohlin L."/>
            <person name="Mouttaki H."/>
            <person name="Kim U."/>
            <person name="Krupp R.S."/>
            <person name="Rios-Hernandez L."/>
            <person name="Sieber J."/>
            <person name="Struchtemeyer C.G."/>
            <person name="Bhattacharyya A."/>
            <person name="Campbell J.W."/>
            <person name="Gunsalus R.P."/>
        </authorList>
    </citation>
    <scope>NUCLEOTIDE SEQUENCE [LARGE SCALE GENOMIC DNA]</scope>
    <source>
        <strain>SB</strain>
    </source>
</reference>
<feature type="chain" id="PRO_1000010098" description="DNA mismatch repair protein MutL">
    <location>
        <begin position="1"/>
        <end position="616"/>
    </location>
</feature>
<name>MUTL_SYNAS</name>
<gene>
    <name evidence="1" type="primary">mutL</name>
    <name type="ordered locus">SYNAS_19460</name>
    <name type="ORF">SYN_02889</name>
</gene>
<comment type="function">
    <text evidence="1">This protein is involved in the repair of mismatches in DNA. It is required for dam-dependent methyl-directed DNA mismatch repair. May act as a 'molecular matchmaker', a protein that promotes the formation of a stable complex between two or more DNA-binding proteins in an ATP-dependent manner without itself being part of a final effector complex.</text>
</comment>
<comment type="similarity">
    <text evidence="1">Belongs to the DNA mismatch repair MutL/HexB family.</text>
</comment>